<protein>
    <recommendedName>
        <fullName>Stearoyl-[acyl-carrier-protein] 9-desaturase 2, chloroplastic</fullName>
        <shortName>Stearoyl-ACP desaturase 2</shortName>
        <ecNumber evidence="1">1.14.19.2</ecNumber>
    </recommendedName>
    <alternativeName>
        <fullName>Acyl-[acyl-carrier-protein] desaturase 2</fullName>
    </alternativeName>
    <alternativeName>
        <fullName>SSI2 homolog</fullName>
        <shortName>OsSSI2</shortName>
    </alternativeName>
</protein>
<accession>A2WYF4</accession>
<feature type="transit peptide" description="Chloroplast" evidence="2">
    <location>
        <begin position="1"/>
        <end position="32"/>
    </location>
</feature>
<feature type="chain" id="PRO_0000401429" description="Stearoyl-[acyl-carrier-protein] 9-desaturase 2, chloroplastic">
    <location>
        <begin position="33"/>
        <end position="396"/>
    </location>
</feature>
<feature type="binding site" evidence="1">
    <location>
        <position position="138"/>
    </location>
    <ligand>
        <name>Fe cation</name>
        <dbReference type="ChEBI" id="CHEBI:24875"/>
        <label>1</label>
    </ligand>
</feature>
<feature type="binding site" evidence="1">
    <location>
        <position position="176"/>
    </location>
    <ligand>
        <name>Fe cation</name>
        <dbReference type="ChEBI" id="CHEBI:24875"/>
        <label>1</label>
    </ligand>
</feature>
<feature type="binding site" evidence="1">
    <location>
        <position position="176"/>
    </location>
    <ligand>
        <name>Fe cation</name>
        <dbReference type="ChEBI" id="CHEBI:24875"/>
        <label>2</label>
    </ligand>
</feature>
<feature type="binding site" evidence="1">
    <location>
        <position position="179"/>
    </location>
    <ligand>
        <name>Fe cation</name>
        <dbReference type="ChEBI" id="CHEBI:24875"/>
        <label>1</label>
    </ligand>
</feature>
<feature type="binding site" evidence="1">
    <location>
        <position position="229"/>
    </location>
    <ligand>
        <name>Fe cation</name>
        <dbReference type="ChEBI" id="CHEBI:24875"/>
        <label>2</label>
    </ligand>
</feature>
<feature type="binding site" evidence="1">
    <location>
        <position position="262"/>
    </location>
    <ligand>
        <name>Fe cation</name>
        <dbReference type="ChEBI" id="CHEBI:24875"/>
        <label>1</label>
    </ligand>
</feature>
<feature type="binding site" evidence="1">
    <location>
        <position position="262"/>
    </location>
    <ligand>
        <name>Fe cation</name>
        <dbReference type="ChEBI" id="CHEBI:24875"/>
        <label>2</label>
    </ligand>
</feature>
<feature type="binding site" evidence="1">
    <location>
        <position position="265"/>
    </location>
    <ligand>
        <name>Fe cation</name>
        <dbReference type="ChEBI" id="CHEBI:24875"/>
        <label>2</label>
    </ligand>
</feature>
<comment type="function">
    <text evidence="1">Converts stearoyl-ACP to oleoyl-ACP by introduction of a cis double bond between carbons 9 and 10 of the acyl chain. Required for the repression of the salicylic acid (SA) signaling pathway.</text>
</comment>
<comment type="catalytic activity">
    <reaction evidence="1">
        <text>octadecanoyl-[ACP] + 2 reduced [2Fe-2S]-[ferredoxin] + O2 + 2 H(+) = (9Z)-octadecenoyl-[ACP] + 2 oxidized [2Fe-2S]-[ferredoxin] + 2 H2O</text>
        <dbReference type="Rhea" id="RHEA:11776"/>
        <dbReference type="Rhea" id="RHEA-COMP:9656"/>
        <dbReference type="Rhea" id="RHEA-COMP:9924"/>
        <dbReference type="Rhea" id="RHEA-COMP:10000"/>
        <dbReference type="Rhea" id="RHEA-COMP:10001"/>
        <dbReference type="ChEBI" id="CHEBI:15377"/>
        <dbReference type="ChEBI" id="CHEBI:15378"/>
        <dbReference type="ChEBI" id="CHEBI:15379"/>
        <dbReference type="ChEBI" id="CHEBI:33737"/>
        <dbReference type="ChEBI" id="CHEBI:33738"/>
        <dbReference type="ChEBI" id="CHEBI:78495"/>
        <dbReference type="ChEBI" id="CHEBI:78783"/>
        <dbReference type="EC" id="1.14.19.2"/>
    </reaction>
</comment>
<comment type="cofactor">
    <cofactor evidence="1">
        <name>Fe(2+)</name>
        <dbReference type="ChEBI" id="CHEBI:29033"/>
    </cofactor>
    <text evidence="1">Binds 2 Fe(2+) ions per subunit.</text>
</comment>
<comment type="pathway">
    <text>Lipid metabolism; fatty acid metabolism.</text>
</comment>
<comment type="subunit">
    <text evidence="1">Homodimer.</text>
</comment>
<comment type="subcellular location">
    <subcellularLocation>
        <location evidence="3">Plastid</location>
        <location evidence="3">Chloroplast</location>
    </subcellularLocation>
</comment>
<comment type="similarity">
    <text evidence="3">Belongs to the fatty acid desaturase type 2 family.</text>
</comment>
<evidence type="ECO:0000250" key="1">
    <source>
        <dbReference type="UniProtKB" id="P22337"/>
    </source>
</evidence>
<evidence type="ECO:0000255" key="2"/>
<evidence type="ECO:0000305" key="3"/>
<proteinExistence type="inferred from homology"/>
<reference key="1">
    <citation type="journal article" date="2005" name="PLoS Biol.">
        <title>The genomes of Oryza sativa: a history of duplications.</title>
        <authorList>
            <person name="Yu J."/>
            <person name="Wang J."/>
            <person name="Lin W."/>
            <person name="Li S."/>
            <person name="Li H."/>
            <person name="Zhou J."/>
            <person name="Ni P."/>
            <person name="Dong W."/>
            <person name="Hu S."/>
            <person name="Zeng C."/>
            <person name="Zhang J."/>
            <person name="Zhang Y."/>
            <person name="Li R."/>
            <person name="Xu Z."/>
            <person name="Li S."/>
            <person name="Li X."/>
            <person name="Zheng H."/>
            <person name="Cong L."/>
            <person name="Lin L."/>
            <person name="Yin J."/>
            <person name="Geng J."/>
            <person name="Li G."/>
            <person name="Shi J."/>
            <person name="Liu J."/>
            <person name="Lv H."/>
            <person name="Li J."/>
            <person name="Wang J."/>
            <person name="Deng Y."/>
            <person name="Ran L."/>
            <person name="Shi X."/>
            <person name="Wang X."/>
            <person name="Wu Q."/>
            <person name="Li C."/>
            <person name="Ren X."/>
            <person name="Wang J."/>
            <person name="Wang X."/>
            <person name="Li D."/>
            <person name="Liu D."/>
            <person name="Zhang X."/>
            <person name="Ji Z."/>
            <person name="Zhao W."/>
            <person name="Sun Y."/>
            <person name="Zhang Z."/>
            <person name="Bao J."/>
            <person name="Han Y."/>
            <person name="Dong L."/>
            <person name="Ji J."/>
            <person name="Chen P."/>
            <person name="Wu S."/>
            <person name="Liu J."/>
            <person name="Xiao Y."/>
            <person name="Bu D."/>
            <person name="Tan J."/>
            <person name="Yang L."/>
            <person name="Ye C."/>
            <person name="Zhang J."/>
            <person name="Xu J."/>
            <person name="Zhou Y."/>
            <person name="Yu Y."/>
            <person name="Zhang B."/>
            <person name="Zhuang S."/>
            <person name="Wei H."/>
            <person name="Liu B."/>
            <person name="Lei M."/>
            <person name="Yu H."/>
            <person name="Li Y."/>
            <person name="Xu H."/>
            <person name="Wei S."/>
            <person name="He X."/>
            <person name="Fang L."/>
            <person name="Zhang Z."/>
            <person name="Zhang Y."/>
            <person name="Huang X."/>
            <person name="Su Z."/>
            <person name="Tong W."/>
            <person name="Li J."/>
            <person name="Tong Z."/>
            <person name="Li S."/>
            <person name="Ye J."/>
            <person name="Wang L."/>
            <person name="Fang L."/>
            <person name="Lei T."/>
            <person name="Chen C.-S."/>
            <person name="Chen H.-C."/>
            <person name="Xu Z."/>
            <person name="Li H."/>
            <person name="Huang H."/>
            <person name="Zhang F."/>
            <person name="Xu H."/>
            <person name="Li N."/>
            <person name="Zhao C."/>
            <person name="Li S."/>
            <person name="Dong L."/>
            <person name="Huang Y."/>
            <person name="Li L."/>
            <person name="Xi Y."/>
            <person name="Qi Q."/>
            <person name="Li W."/>
            <person name="Zhang B."/>
            <person name="Hu W."/>
            <person name="Zhang Y."/>
            <person name="Tian X."/>
            <person name="Jiao Y."/>
            <person name="Liang X."/>
            <person name="Jin J."/>
            <person name="Gao L."/>
            <person name="Zheng W."/>
            <person name="Hao B."/>
            <person name="Liu S.-M."/>
            <person name="Wang W."/>
            <person name="Yuan L."/>
            <person name="Cao M."/>
            <person name="McDermott J."/>
            <person name="Samudrala R."/>
            <person name="Wang J."/>
            <person name="Wong G.K.-S."/>
            <person name="Yang H."/>
        </authorList>
    </citation>
    <scope>NUCLEOTIDE SEQUENCE [LARGE SCALE GENOMIC DNA]</scope>
    <source>
        <strain>cv. 93-11</strain>
    </source>
</reference>
<keyword id="KW-0150">Chloroplast</keyword>
<keyword id="KW-0275">Fatty acid biosynthesis</keyword>
<keyword id="KW-0276">Fatty acid metabolism</keyword>
<keyword id="KW-0408">Iron</keyword>
<keyword id="KW-0444">Lipid biosynthesis</keyword>
<keyword id="KW-0443">Lipid metabolism</keyword>
<keyword id="KW-0479">Metal-binding</keyword>
<keyword id="KW-0560">Oxidoreductase</keyword>
<keyword id="KW-0611">Plant defense</keyword>
<keyword id="KW-0934">Plastid</keyword>
<keyword id="KW-1185">Reference proteome</keyword>
<keyword id="KW-0809">Transit peptide</keyword>
<organism>
    <name type="scientific">Oryza sativa subsp. indica</name>
    <name type="common">Rice</name>
    <dbReference type="NCBI Taxonomy" id="39946"/>
    <lineage>
        <taxon>Eukaryota</taxon>
        <taxon>Viridiplantae</taxon>
        <taxon>Streptophyta</taxon>
        <taxon>Embryophyta</taxon>
        <taxon>Tracheophyta</taxon>
        <taxon>Spermatophyta</taxon>
        <taxon>Magnoliopsida</taxon>
        <taxon>Liliopsida</taxon>
        <taxon>Poales</taxon>
        <taxon>Poaceae</taxon>
        <taxon>BOP clade</taxon>
        <taxon>Oryzoideae</taxon>
        <taxon>Oryzeae</taxon>
        <taxon>Oryzinae</taxon>
        <taxon>Oryza</taxon>
        <taxon>Oryza sativa</taxon>
    </lineage>
</organism>
<gene>
    <name type="primary">SSI2</name>
    <name type="ORF">OsI_04956</name>
</gene>
<dbReference type="EC" id="1.14.19.2" evidence="1"/>
<dbReference type="EMBL" id="CM000126">
    <property type="protein sequence ID" value="EAY77000.1"/>
    <property type="molecule type" value="Genomic_DNA"/>
</dbReference>
<dbReference type="SMR" id="A2WYF4"/>
<dbReference type="STRING" id="39946.A2WYF4"/>
<dbReference type="EnsemblPlants" id="BGIOSGA000237-TA">
    <property type="protein sequence ID" value="BGIOSGA000237-PA"/>
    <property type="gene ID" value="BGIOSGA000237"/>
</dbReference>
<dbReference type="Gramene" id="BGIOSGA000237-TA">
    <property type="protein sequence ID" value="BGIOSGA000237-PA"/>
    <property type="gene ID" value="BGIOSGA000237"/>
</dbReference>
<dbReference type="HOGENOM" id="CLU_034505_1_1_1"/>
<dbReference type="OMA" id="NRHSMLH"/>
<dbReference type="UniPathway" id="UPA00199"/>
<dbReference type="Proteomes" id="UP000007015">
    <property type="component" value="Chromosome 1"/>
</dbReference>
<dbReference type="GO" id="GO:0009570">
    <property type="term" value="C:chloroplast stroma"/>
    <property type="evidence" value="ECO:0007669"/>
    <property type="project" value="TreeGrafter"/>
</dbReference>
<dbReference type="GO" id="GO:0046872">
    <property type="term" value="F:metal ion binding"/>
    <property type="evidence" value="ECO:0007669"/>
    <property type="project" value="UniProtKB-KW"/>
</dbReference>
<dbReference type="GO" id="GO:0045300">
    <property type="term" value="F:stearoyl-[ACP] desaturase activity"/>
    <property type="evidence" value="ECO:0007669"/>
    <property type="project" value="UniProtKB-EC"/>
</dbReference>
<dbReference type="GO" id="GO:0006952">
    <property type="term" value="P:defense response"/>
    <property type="evidence" value="ECO:0007669"/>
    <property type="project" value="UniProtKB-KW"/>
</dbReference>
<dbReference type="GO" id="GO:0006633">
    <property type="term" value="P:fatty acid biosynthetic process"/>
    <property type="evidence" value="ECO:0007669"/>
    <property type="project" value="UniProtKB-KW"/>
</dbReference>
<dbReference type="CDD" id="cd01050">
    <property type="entry name" value="Acyl_ACP_Desat"/>
    <property type="match status" value="1"/>
</dbReference>
<dbReference type="FunFam" id="1.10.620.20:FF:000002">
    <property type="entry name" value="Stearoyl-[acyl-carrier-protein] 9-desaturase, chloroplastic"/>
    <property type="match status" value="1"/>
</dbReference>
<dbReference type="Gene3D" id="1.10.620.20">
    <property type="entry name" value="Ribonucleotide Reductase, subunit A"/>
    <property type="match status" value="1"/>
</dbReference>
<dbReference type="InterPro" id="IPR005067">
    <property type="entry name" value="Fatty_acid_desaturase-2"/>
</dbReference>
<dbReference type="InterPro" id="IPR009078">
    <property type="entry name" value="Ferritin-like_SF"/>
</dbReference>
<dbReference type="InterPro" id="IPR012348">
    <property type="entry name" value="RNR-like"/>
</dbReference>
<dbReference type="PANTHER" id="PTHR31155">
    <property type="entry name" value="ACYL- ACYL-CARRIER-PROTEIN DESATURASE-RELATED"/>
    <property type="match status" value="1"/>
</dbReference>
<dbReference type="PANTHER" id="PTHR31155:SF9">
    <property type="entry name" value="STEAROYL-[ACYL-CARRIER-PROTEIN] 9-DESATURASE 7, CHLOROPLASTIC"/>
    <property type="match status" value="1"/>
</dbReference>
<dbReference type="Pfam" id="PF03405">
    <property type="entry name" value="FA_desaturase_2"/>
    <property type="match status" value="1"/>
</dbReference>
<dbReference type="PIRSF" id="PIRSF000346">
    <property type="entry name" value="Dlt9_acylACP_des"/>
    <property type="match status" value="1"/>
</dbReference>
<dbReference type="SUPFAM" id="SSF47240">
    <property type="entry name" value="Ferritin-like"/>
    <property type="match status" value="1"/>
</dbReference>
<name>STAD2_ORYSI</name>
<sequence>MALRPNDVTLRLTPPLAAAARRNRRAAAGGVRVYAVASGAVSTKVENKKPFAPPREVHVQVTHSMPPQKIEIFKSLDDWARDNILSHLKPVEKCWQPQDFLPDPASDGFHDEVKELRERAKEIPDDYFVCLVGDMITEEALPTYQTMLNTLDGVRDETGASPTAWAVWTRAWTAEENRHGDLLNKYLYLTGRVDMRQIEKTIQYLIGSGMDPRTENNPYLGFIYTSFQERATFISHGNTARHAKDFGDLKLAQICGIIASDEKRHETAYTKIVEKLFEIDPDGTVLAFADMMKKKISMPAHLMFDGEDDKLFEHFSMVAQRLGVYTAKDYADILEFLVSRWKISDLTGLSSEGNKAQDYLCTLAARIRRLDERAQSRAKKAGTLPFSWVYGREVQL</sequence>